<sequence length="824" mass="92561">MNEPMSLFDDLPEEHDEPQEAPERRLPMVVLGEMVIMPHMTIPLQVPQGKSYRAMERAWEEDRDVLLIFVREHQLEGYKSNQPQNLPPIGVIAQLQEFAKLNDGTARVILEGQSRAQIIEAIQITPFYRVRCRPYTDPPVSGLEVEALMETVKQQVDEFVEHLGEVPQEAVQFVHRIDRPGHLADIVTWGPAFDFKDRLEVLNTLDPVERLRKVYLVLARQLELLKLRVKIQQDTKEVLDQSQREYFLREQLRIIRRELGEDEEGDDPIDELRRKIHELDAPEYVKNQALHELKRLAQQGMNNPESGVIRTYLDWILSLPWADEELPEISITEAQKVLDADHYGLEKVKERILEYLAVRKLAGDKMRSPILCFVGPPGVGKTSLGRSIARALGRKFVRTSLGGVRDEAEIRGHRRTYIGAMPGRIIQAMKNAKSKSPVYILDEVDKIGLDFRGDPTSALLEVLDPEQNNAFSDHYLEIPFDLSKVIFIATANQLDPIPLPLRDRMEIIEIGGYTEDEKLEIARGFLIPKQREFHGLTEDQIEFTEGAILKLIREYTREAGVRGLEREIASLCRKVARQVAEQTEANGELPPKFVIDEAAVVKYLGPERYTYGIAEEQDEVGVATGVAWTSAGGDILSIEVLPFKGKGQLQLTGQLGEVMKESAQTAVSYVRSRAADFGIDPNTFEETNIHIHIPEGAVPKDDPSAGITLTTALISALTGTPVRRDVAMTGEVTLRGKVLPIGGLKEKTLAAHRAGIRTFILPKENAKDISELPEKVRRELNLIPVSSMDEVLRIALSRMPTPANNQNGSHTNNRGQPSPAPAGT</sequence>
<comment type="function">
    <text evidence="1">ATP-dependent serine protease that mediates the selective degradation of mutant and abnormal proteins as well as certain short-lived regulatory proteins. Required for cellular homeostasis and for survival from DNA damage and developmental changes induced by stress. Degrades polypeptides processively to yield small peptide fragments that are 5 to 10 amino acids long. Binds to DNA in a double-stranded, site-specific manner.</text>
</comment>
<comment type="catalytic activity">
    <reaction evidence="1">
        <text>Hydrolysis of proteins in presence of ATP.</text>
        <dbReference type="EC" id="3.4.21.53"/>
    </reaction>
</comment>
<comment type="subunit">
    <text evidence="1">Homohexamer. Organized in a ring with a central cavity.</text>
</comment>
<comment type="subcellular location">
    <subcellularLocation>
        <location evidence="1">Cytoplasm</location>
    </subcellularLocation>
</comment>
<comment type="induction">
    <text evidence="1">By heat shock.</text>
</comment>
<comment type="similarity">
    <text evidence="1">Belongs to the peptidase S16 family.</text>
</comment>
<keyword id="KW-0067">ATP-binding</keyword>
<keyword id="KW-0963">Cytoplasm</keyword>
<keyword id="KW-0378">Hydrolase</keyword>
<keyword id="KW-0547">Nucleotide-binding</keyword>
<keyword id="KW-0645">Protease</keyword>
<keyword id="KW-0720">Serine protease</keyword>
<keyword id="KW-0346">Stress response</keyword>
<protein>
    <recommendedName>
        <fullName evidence="1">Lon protease</fullName>
        <ecNumber evidence="1">3.4.21.53</ecNumber>
    </recommendedName>
    <alternativeName>
        <fullName evidence="1">ATP-dependent protease La</fullName>
    </alternativeName>
</protein>
<evidence type="ECO:0000255" key="1">
    <source>
        <dbReference type="HAMAP-Rule" id="MF_01973"/>
    </source>
</evidence>
<evidence type="ECO:0000255" key="2">
    <source>
        <dbReference type="PROSITE-ProRule" id="PRU01122"/>
    </source>
</evidence>
<evidence type="ECO:0000255" key="3">
    <source>
        <dbReference type="PROSITE-ProRule" id="PRU01123"/>
    </source>
</evidence>
<evidence type="ECO:0000256" key="4">
    <source>
        <dbReference type="SAM" id="MobiDB-lite"/>
    </source>
</evidence>
<name>LON_CHLAD</name>
<organism>
    <name type="scientific">Chloroflexus aggregans (strain MD-66 / DSM 9485)</name>
    <dbReference type="NCBI Taxonomy" id="326427"/>
    <lineage>
        <taxon>Bacteria</taxon>
        <taxon>Bacillati</taxon>
        <taxon>Chloroflexota</taxon>
        <taxon>Chloroflexia</taxon>
        <taxon>Chloroflexales</taxon>
        <taxon>Chloroflexineae</taxon>
        <taxon>Chloroflexaceae</taxon>
        <taxon>Chloroflexus</taxon>
    </lineage>
</organism>
<reference key="1">
    <citation type="submission" date="2008-12" db="EMBL/GenBank/DDBJ databases">
        <title>Complete sequence of Chloroflexus aggregans DSM 9485.</title>
        <authorList>
            <consortium name="US DOE Joint Genome Institute"/>
            <person name="Lucas S."/>
            <person name="Copeland A."/>
            <person name="Lapidus A."/>
            <person name="Glavina del Rio T."/>
            <person name="Dalin E."/>
            <person name="Tice H."/>
            <person name="Pitluck S."/>
            <person name="Foster B."/>
            <person name="Larimer F."/>
            <person name="Land M."/>
            <person name="Hauser L."/>
            <person name="Kyrpides N."/>
            <person name="Mikhailova N."/>
            <person name="Bryant D.A."/>
            <person name="Richardson P."/>
        </authorList>
    </citation>
    <scope>NUCLEOTIDE SEQUENCE [LARGE SCALE GENOMIC DNA]</scope>
    <source>
        <strain>MD-66 / DSM 9485</strain>
    </source>
</reference>
<dbReference type="EC" id="3.4.21.53" evidence="1"/>
<dbReference type="EMBL" id="CP001337">
    <property type="protein sequence ID" value="ACL23993.1"/>
    <property type="molecule type" value="Genomic_DNA"/>
</dbReference>
<dbReference type="RefSeq" id="WP_012616357.1">
    <property type="nucleotide sequence ID" value="NC_011831.1"/>
</dbReference>
<dbReference type="SMR" id="B8G736"/>
<dbReference type="STRING" id="326427.Cagg_1079"/>
<dbReference type="MEROPS" id="S16.001"/>
<dbReference type="KEGG" id="cag:Cagg_1079"/>
<dbReference type="eggNOG" id="COG0466">
    <property type="taxonomic scope" value="Bacteria"/>
</dbReference>
<dbReference type="HOGENOM" id="CLU_004109_4_3_0"/>
<dbReference type="OrthoDB" id="9803599at2"/>
<dbReference type="Proteomes" id="UP000002508">
    <property type="component" value="Chromosome"/>
</dbReference>
<dbReference type="GO" id="GO:0005737">
    <property type="term" value="C:cytoplasm"/>
    <property type="evidence" value="ECO:0007669"/>
    <property type="project" value="UniProtKB-SubCell"/>
</dbReference>
<dbReference type="GO" id="GO:0005524">
    <property type="term" value="F:ATP binding"/>
    <property type="evidence" value="ECO:0007669"/>
    <property type="project" value="UniProtKB-UniRule"/>
</dbReference>
<dbReference type="GO" id="GO:0016887">
    <property type="term" value="F:ATP hydrolysis activity"/>
    <property type="evidence" value="ECO:0007669"/>
    <property type="project" value="UniProtKB-UniRule"/>
</dbReference>
<dbReference type="GO" id="GO:0004176">
    <property type="term" value="F:ATP-dependent peptidase activity"/>
    <property type="evidence" value="ECO:0007669"/>
    <property type="project" value="UniProtKB-UniRule"/>
</dbReference>
<dbReference type="GO" id="GO:0043565">
    <property type="term" value="F:sequence-specific DNA binding"/>
    <property type="evidence" value="ECO:0007669"/>
    <property type="project" value="UniProtKB-UniRule"/>
</dbReference>
<dbReference type="GO" id="GO:0004252">
    <property type="term" value="F:serine-type endopeptidase activity"/>
    <property type="evidence" value="ECO:0007669"/>
    <property type="project" value="UniProtKB-UniRule"/>
</dbReference>
<dbReference type="GO" id="GO:0034605">
    <property type="term" value="P:cellular response to heat"/>
    <property type="evidence" value="ECO:0007669"/>
    <property type="project" value="UniProtKB-UniRule"/>
</dbReference>
<dbReference type="GO" id="GO:0006515">
    <property type="term" value="P:protein quality control for misfolded or incompletely synthesized proteins"/>
    <property type="evidence" value="ECO:0007669"/>
    <property type="project" value="UniProtKB-UniRule"/>
</dbReference>
<dbReference type="CDD" id="cd19500">
    <property type="entry name" value="RecA-like_Lon"/>
    <property type="match status" value="1"/>
</dbReference>
<dbReference type="FunFam" id="3.40.50.300:FF:000382">
    <property type="entry name" value="Lon protease homolog 2, peroxisomal"/>
    <property type="match status" value="1"/>
</dbReference>
<dbReference type="Gene3D" id="1.10.8.60">
    <property type="match status" value="1"/>
</dbReference>
<dbReference type="Gene3D" id="1.20.5.5270">
    <property type="match status" value="1"/>
</dbReference>
<dbReference type="Gene3D" id="1.20.58.1480">
    <property type="match status" value="1"/>
</dbReference>
<dbReference type="Gene3D" id="3.30.230.10">
    <property type="match status" value="1"/>
</dbReference>
<dbReference type="Gene3D" id="2.30.130.40">
    <property type="entry name" value="LON domain-like"/>
    <property type="match status" value="1"/>
</dbReference>
<dbReference type="Gene3D" id="3.40.50.300">
    <property type="entry name" value="P-loop containing nucleotide triphosphate hydrolases"/>
    <property type="match status" value="1"/>
</dbReference>
<dbReference type="HAMAP" id="MF_01973">
    <property type="entry name" value="lon_bact"/>
    <property type="match status" value="1"/>
</dbReference>
<dbReference type="InterPro" id="IPR003593">
    <property type="entry name" value="AAA+_ATPase"/>
</dbReference>
<dbReference type="InterPro" id="IPR003959">
    <property type="entry name" value="ATPase_AAA_core"/>
</dbReference>
<dbReference type="InterPro" id="IPR027543">
    <property type="entry name" value="Lon_bac"/>
</dbReference>
<dbReference type="InterPro" id="IPR004815">
    <property type="entry name" value="Lon_bac/euk-typ"/>
</dbReference>
<dbReference type="InterPro" id="IPR054594">
    <property type="entry name" value="Lon_lid"/>
</dbReference>
<dbReference type="InterPro" id="IPR008269">
    <property type="entry name" value="Lon_proteolytic"/>
</dbReference>
<dbReference type="InterPro" id="IPR027065">
    <property type="entry name" value="Lon_Prtase"/>
</dbReference>
<dbReference type="InterPro" id="IPR003111">
    <property type="entry name" value="Lon_prtase_N"/>
</dbReference>
<dbReference type="InterPro" id="IPR046336">
    <property type="entry name" value="Lon_prtase_N_sf"/>
</dbReference>
<dbReference type="InterPro" id="IPR027417">
    <property type="entry name" value="P-loop_NTPase"/>
</dbReference>
<dbReference type="InterPro" id="IPR015947">
    <property type="entry name" value="PUA-like_sf"/>
</dbReference>
<dbReference type="InterPro" id="IPR020568">
    <property type="entry name" value="Ribosomal_Su5_D2-typ_SF"/>
</dbReference>
<dbReference type="InterPro" id="IPR014721">
    <property type="entry name" value="Ribsml_uS5_D2-typ_fold_subgr"/>
</dbReference>
<dbReference type="NCBIfam" id="TIGR00763">
    <property type="entry name" value="lon"/>
    <property type="match status" value="1"/>
</dbReference>
<dbReference type="PANTHER" id="PTHR10046">
    <property type="entry name" value="ATP DEPENDENT LON PROTEASE FAMILY MEMBER"/>
    <property type="match status" value="1"/>
</dbReference>
<dbReference type="Pfam" id="PF00004">
    <property type="entry name" value="AAA"/>
    <property type="match status" value="1"/>
</dbReference>
<dbReference type="Pfam" id="PF05362">
    <property type="entry name" value="Lon_C"/>
    <property type="match status" value="1"/>
</dbReference>
<dbReference type="Pfam" id="PF22667">
    <property type="entry name" value="Lon_lid"/>
    <property type="match status" value="1"/>
</dbReference>
<dbReference type="Pfam" id="PF02190">
    <property type="entry name" value="LON_substr_bdg"/>
    <property type="match status" value="1"/>
</dbReference>
<dbReference type="PIRSF" id="PIRSF001174">
    <property type="entry name" value="Lon_proteas"/>
    <property type="match status" value="1"/>
</dbReference>
<dbReference type="PRINTS" id="PR00830">
    <property type="entry name" value="ENDOLAPTASE"/>
</dbReference>
<dbReference type="SMART" id="SM00382">
    <property type="entry name" value="AAA"/>
    <property type="match status" value="1"/>
</dbReference>
<dbReference type="SMART" id="SM00464">
    <property type="entry name" value="LON"/>
    <property type="match status" value="1"/>
</dbReference>
<dbReference type="SUPFAM" id="SSF52540">
    <property type="entry name" value="P-loop containing nucleoside triphosphate hydrolases"/>
    <property type="match status" value="1"/>
</dbReference>
<dbReference type="SUPFAM" id="SSF88697">
    <property type="entry name" value="PUA domain-like"/>
    <property type="match status" value="1"/>
</dbReference>
<dbReference type="SUPFAM" id="SSF54211">
    <property type="entry name" value="Ribosomal protein S5 domain 2-like"/>
    <property type="match status" value="1"/>
</dbReference>
<dbReference type="PROSITE" id="PS51787">
    <property type="entry name" value="LON_N"/>
    <property type="match status" value="1"/>
</dbReference>
<dbReference type="PROSITE" id="PS51786">
    <property type="entry name" value="LON_PROTEOLYTIC"/>
    <property type="match status" value="1"/>
</dbReference>
<feature type="chain" id="PRO_0000396543" description="Lon protease">
    <location>
        <begin position="1"/>
        <end position="824"/>
    </location>
</feature>
<feature type="domain" description="Lon N-terminal" evidence="3">
    <location>
        <begin position="26"/>
        <end position="222"/>
    </location>
</feature>
<feature type="domain" description="Lon proteolytic" evidence="2">
    <location>
        <begin position="617"/>
        <end position="798"/>
    </location>
</feature>
<feature type="region of interest" description="Disordered" evidence="4">
    <location>
        <begin position="1"/>
        <end position="23"/>
    </location>
</feature>
<feature type="region of interest" description="Disordered" evidence="4">
    <location>
        <begin position="800"/>
        <end position="824"/>
    </location>
</feature>
<feature type="compositionally biased region" description="Acidic residues" evidence="4">
    <location>
        <begin position="10"/>
        <end position="20"/>
    </location>
</feature>
<feature type="compositionally biased region" description="Polar residues" evidence="4">
    <location>
        <begin position="802"/>
        <end position="816"/>
    </location>
</feature>
<feature type="active site" evidence="1">
    <location>
        <position position="704"/>
    </location>
</feature>
<feature type="active site" evidence="1">
    <location>
        <position position="747"/>
    </location>
</feature>
<feature type="binding site" evidence="1">
    <location>
        <begin position="375"/>
        <end position="382"/>
    </location>
    <ligand>
        <name>ATP</name>
        <dbReference type="ChEBI" id="CHEBI:30616"/>
    </ligand>
</feature>
<accession>B8G736</accession>
<proteinExistence type="inferred from homology"/>
<gene>
    <name evidence="1" type="primary">lon</name>
    <name type="ordered locus">Cagg_1079</name>
</gene>